<comment type="function">
    <text evidence="1">Involved in the catabolism of L-rhamnose (6-deoxy-L-mannose). Catalyzes the transfer of the gamma-phosphate group from ATP to the 1-hydroxyl group of L-rhamnulose to yield L-rhamnulose 1-phosphate.</text>
</comment>
<comment type="catalytic activity">
    <reaction evidence="1">
        <text>L-rhamnulose + ATP = L-rhamnulose 1-phosphate + ADP + H(+)</text>
        <dbReference type="Rhea" id="RHEA:20117"/>
        <dbReference type="ChEBI" id="CHEBI:15378"/>
        <dbReference type="ChEBI" id="CHEBI:17897"/>
        <dbReference type="ChEBI" id="CHEBI:30616"/>
        <dbReference type="ChEBI" id="CHEBI:58313"/>
        <dbReference type="ChEBI" id="CHEBI:456216"/>
        <dbReference type="EC" id="2.7.1.5"/>
    </reaction>
</comment>
<comment type="cofactor">
    <cofactor evidence="1">
        <name>Mg(2+)</name>
        <dbReference type="ChEBI" id="CHEBI:18420"/>
    </cofactor>
</comment>
<comment type="pathway">
    <text evidence="1">Carbohydrate degradation; L-rhamnose degradation; glycerone phosphate from L-rhamnose: step 2/3.</text>
</comment>
<comment type="subunit">
    <text evidence="1">Monomer.</text>
</comment>
<comment type="similarity">
    <text evidence="1">Belongs to the rhamnulokinase family.</text>
</comment>
<keyword id="KW-0067">ATP-binding</keyword>
<keyword id="KW-1015">Disulfide bond</keyword>
<keyword id="KW-0418">Kinase</keyword>
<keyword id="KW-0460">Magnesium</keyword>
<keyword id="KW-0547">Nucleotide-binding</keyword>
<keyword id="KW-1185">Reference proteome</keyword>
<keyword id="KW-0684">Rhamnose metabolism</keyword>
<keyword id="KW-0808">Transferase</keyword>
<organism>
    <name type="scientific">Escherichia coli O6:H1 (strain CFT073 / ATCC 700928 / UPEC)</name>
    <dbReference type="NCBI Taxonomy" id="199310"/>
    <lineage>
        <taxon>Bacteria</taxon>
        <taxon>Pseudomonadati</taxon>
        <taxon>Pseudomonadota</taxon>
        <taxon>Gammaproteobacteria</taxon>
        <taxon>Enterobacterales</taxon>
        <taxon>Enterobacteriaceae</taxon>
        <taxon>Escherichia</taxon>
    </lineage>
</organism>
<sequence length="489" mass="54076">MTFRNCVAVDLGASSGRVMLARYERECRSLTLREIHRFNNGLHSQNGYVTWNVDSLESAIRLGLNKVCEEGIRIDSIGIDTWGVDFVLLDQQGQRVGLPVAYRDSRTNGLMAQAQQQLGKRDIYQRSGIQFLPFNTIYQLRALTEQQPELIPHIAHALLIPDYFSYRLTGKMNWEYTNATTTQLVNINSDDWDESLLAWSGANKAWFGRPTHPGNVIGHWICPQGNEIPVVAVASHDTASAVIASPLNGSRAAYLSSGTWSLMGFESQTPFTNDTALAANITNEGGAEGRYRVLKNIMGLWLLQRVLQERQINDLPALIAATQALPACRFIINPNDDRFINPDEMCSEIQAACRETAQPIPESDAELARCIFDSLALLYADVLHELAQLRGEDFSQLHIVGGGCQNTLLNQLCADACGIRVIAGPVEASTLGNIGIQLMTLDELNNVDDFRQVVSTTANLTTFTPNPDSEIAHYVAQIHSTRQTKELCA</sequence>
<name>RHAB_ECOL6</name>
<protein>
    <recommendedName>
        <fullName evidence="1">Rhamnulokinase</fullName>
        <shortName evidence="1">RhaB</shortName>
        <ecNumber evidence="1">2.7.1.5</ecNumber>
    </recommendedName>
    <alternativeName>
        <fullName evidence="1">ATP:L-rhamnulose phosphotransferase</fullName>
    </alternativeName>
    <alternativeName>
        <fullName evidence="1">L-rhamnulose 1-kinase</fullName>
    </alternativeName>
    <alternativeName>
        <fullName evidence="1">Rhamnulose kinase</fullName>
    </alternativeName>
</protein>
<proteinExistence type="inferred from homology"/>
<gene>
    <name evidence="1" type="primary">rhaB</name>
    <name type="ordered locus">c4853</name>
</gene>
<evidence type="ECO:0000255" key="1">
    <source>
        <dbReference type="HAMAP-Rule" id="MF_01535"/>
    </source>
</evidence>
<accession>Q8FBD9</accession>
<feature type="chain" id="PRO_0000090532" description="Rhamnulokinase">
    <location>
        <begin position="1"/>
        <end position="489"/>
    </location>
</feature>
<feature type="active site" description="Proton acceptor" evidence="1">
    <location>
        <position position="237"/>
    </location>
</feature>
<feature type="binding site" evidence="1">
    <location>
        <begin position="13"/>
        <end position="17"/>
    </location>
    <ligand>
        <name>ATP</name>
        <dbReference type="ChEBI" id="CHEBI:30616"/>
    </ligand>
</feature>
<feature type="binding site" evidence="1">
    <location>
        <position position="83"/>
    </location>
    <ligand>
        <name>substrate</name>
    </ligand>
</feature>
<feature type="binding site" evidence="1">
    <location>
        <begin position="236"/>
        <end position="238"/>
    </location>
    <ligand>
        <name>substrate</name>
    </ligand>
</feature>
<feature type="binding site" evidence="1">
    <location>
        <position position="259"/>
    </location>
    <ligand>
        <name>ATP</name>
        <dbReference type="ChEBI" id="CHEBI:30616"/>
    </ligand>
</feature>
<feature type="binding site" evidence="1">
    <location>
        <position position="296"/>
    </location>
    <ligand>
        <name>substrate</name>
    </ligand>
</feature>
<feature type="binding site" evidence="1">
    <location>
        <position position="304"/>
    </location>
    <ligand>
        <name>ATP</name>
        <dbReference type="ChEBI" id="CHEBI:30616"/>
    </ligand>
</feature>
<feature type="binding site" evidence="1">
    <location>
        <position position="402"/>
    </location>
    <ligand>
        <name>ATP</name>
        <dbReference type="ChEBI" id="CHEBI:30616"/>
    </ligand>
</feature>
<feature type="disulfide bond" evidence="1">
    <location>
        <begin position="68"/>
        <end position="222"/>
    </location>
</feature>
<feature type="disulfide bond" evidence="1">
    <location>
        <begin position="353"/>
        <end position="370"/>
    </location>
</feature>
<feature type="disulfide bond" evidence="1">
    <location>
        <begin position="413"/>
        <end position="417"/>
    </location>
</feature>
<dbReference type="EC" id="2.7.1.5" evidence="1"/>
<dbReference type="EMBL" id="AE014075">
    <property type="protein sequence ID" value="AAN83281.1"/>
    <property type="molecule type" value="Genomic_DNA"/>
</dbReference>
<dbReference type="RefSeq" id="WP_000144110.1">
    <property type="nucleotide sequence ID" value="NZ_CP051263.1"/>
</dbReference>
<dbReference type="SMR" id="Q8FBD9"/>
<dbReference type="STRING" id="199310.c4853"/>
<dbReference type="KEGG" id="ecc:c4853"/>
<dbReference type="eggNOG" id="COG1070">
    <property type="taxonomic scope" value="Bacteria"/>
</dbReference>
<dbReference type="HOGENOM" id="CLU_039395_0_0_6"/>
<dbReference type="BioCyc" id="ECOL199310:C4853-MONOMER"/>
<dbReference type="UniPathway" id="UPA00541">
    <property type="reaction ID" value="UER00602"/>
</dbReference>
<dbReference type="Proteomes" id="UP000001410">
    <property type="component" value="Chromosome"/>
</dbReference>
<dbReference type="GO" id="GO:0005829">
    <property type="term" value="C:cytosol"/>
    <property type="evidence" value="ECO:0007669"/>
    <property type="project" value="TreeGrafter"/>
</dbReference>
<dbReference type="GO" id="GO:0005524">
    <property type="term" value="F:ATP binding"/>
    <property type="evidence" value="ECO:0007669"/>
    <property type="project" value="UniProtKB-KW"/>
</dbReference>
<dbReference type="GO" id="GO:0004370">
    <property type="term" value="F:glycerol kinase activity"/>
    <property type="evidence" value="ECO:0007669"/>
    <property type="project" value="TreeGrafter"/>
</dbReference>
<dbReference type="GO" id="GO:0008993">
    <property type="term" value="F:rhamnulokinase activity"/>
    <property type="evidence" value="ECO:0007669"/>
    <property type="project" value="UniProtKB-UniRule"/>
</dbReference>
<dbReference type="GO" id="GO:0006071">
    <property type="term" value="P:glycerol metabolic process"/>
    <property type="evidence" value="ECO:0007669"/>
    <property type="project" value="TreeGrafter"/>
</dbReference>
<dbReference type="GO" id="GO:0019301">
    <property type="term" value="P:rhamnose catabolic process"/>
    <property type="evidence" value="ECO:0007669"/>
    <property type="project" value="UniProtKB-UniRule"/>
</dbReference>
<dbReference type="CDD" id="cd07771">
    <property type="entry name" value="ASKHA_NBD_FGGY_RhaB-like"/>
    <property type="match status" value="1"/>
</dbReference>
<dbReference type="FunFam" id="3.30.420.40:FF:000064">
    <property type="entry name" value="Rhamnulokinase"/>
    <property type="match status" value="1"/>
</dbReference>
<dbReference type="FunFam" id="3.30.420.40:FF:000073">
    <property type="entry name" value="Rhamnulokinase"/>
    <property type="match status" value="1"/>
</dbReference>
<dbReference type="Gene3D" id="3.30.420.40">
    <property type="match status" value="2"/>
</dbReference>
<dbReference type="HAMAP" id="MF_01535">
    <property type="entry name" value="Rhamnulokinase"/>
    <property type="match status" value="1"/>
</dbReference>
<dbReference type="InterPro" id="IPR043129">
    <property type="entry name" value="ATPase_NBD"/>
</dbReference>
<dbReference type="InterPro" id="IPR018485">
    <property type="entry name" value="FGGY_C"/>
</dbReference>
<dbReference type="InterPro" id="IPR018484">
    <property type="entry name" value="FGGY_N"/>
</dbReference>
<dbReference type="InterPro" id="IPR013449">
    <property type="entry name" value="Rhamnulokinase"/>
</dbReference>
<dbReference type="NCBIfam" id="NF007925">
    <property type="entry name" value="PRK10640.1"/>
    <property type="match status" value="1"/>
</dbReference>
<dbReference type="NCBIfam" id="TIGR02627">
    <property type="entry name" value="rhamnulo_kin"/>
    <property type="match status" value="1"/>
</dbReference>
<dbReference type="PANTHER" id="PTHR10196:SF93">
    <property type="entry name" value="L-RHAMNULOKINASE"/>
    <property type="match status" value="1"/>
</dbReference>
<dbReference type="PANTHER" id="PTHR10196">
    <property type="entry name" value="SUGAR KINASE"/>
    <property type="match status" value="1"/>
</dbReference>
<dbReference type="Pfam" id="PF02782">
    <property type="entry name" value="FGGY_C"/>
    <property type="match status" value="1"/>
</dbReference>
<dbReference type="Pfam" id="PF00370">
    <property type="entry name" value="FGGY_N"/>
    <property type="match status" value="1"/>
</dbReference>
<dbReference type="SUPFAM" id="SSF53067">
    <property type="entry name" value="Actin-like ATPase domain"/>
    <property type="match status" value="2"/>
</dbReference>
<reference key="1">
    <citation type="journal article" date="2002" name="Proc. Natl. Acad. Sci. U.S.A.">
        <title>Extensive mosaic structure revealed by the complete genome sequence of uropathogenic Escherichia coli.</title>
        <authorList>
            <person name="Welch R.A."/>
            <person name="Burland V."/>
            <person name="Plunkett G. III"/>
            <person name="Redford P."/>
            <person name="Roesch P."/>
            <person name="Rasko D."/>
            <person name="Buckles E.L."/>
            <person name="Liou S.-R."/>
            <person name="Boutin A."/>
            <person name="Hackett J."/>
            <person name="Stroud D."/>
            <person name="Mayhew G.F."/>
            <person name="Rose D.J."/>
            <person name="Zhou S."/>
            <person name="Schwartz D.C."/>
            <person name="Perna N.T."/>
            <person name="Mobley H.L.T."/>
            <person name="Donnenberg M.S."/>
            <person name="Blattner F.R."/>
        </authorList>
    </citation>
    <scope>NUCLEOTIDE SEQUENCE [LARGE SCALE GENOMIC DNA]</scope>
    <source>
        <strain>CFT073 / ATCC 700928 / UPEC</strain>
    </source>
</reference>